<evidence type="ECO:0000255" key="1"/>
<evidence type="ECO:0000269" key="2">
    <source>
    </source>
</evidence>
<evidence type="ECO:0000303" key="3">
    <source>
    </source>
</evidence>
<evidence type="ECO:0000303" key="4">
    <source ref="2"/>
</evidence>
<evidence type="ECO:0000305" key="5"/>
<feature type="chain" id="PRO_0000326074" description="Protein FAM47E">
    <location>
        <begin position="1"/>
        <end position="393"/>
    </location>
</feature>
<feature type="coiled-coil region" evidence="1">
    <location>
        <begin position="326"/>
        <end position="354"/>
    </location>
</feature>
<feature type="splice variant" id="VSP_040931" description="In isoform 2." evidence="3">
    <location>
        <begin position="1"/>
        <end position="113"/>
    </location>
</feature>
<feature type="splice variant" id="VSP_040932" description="In isoform 2." evidence="3">
    <original>FLEDVEAHLTPHPLALYLNLEEAMPIE</original>
    <variation>MQMSVPCVLSSLQNHEPNKPLFTTQSQ</variation>
    <location>
        <begin position="114"/>
        <end position="140"/>
    </location>
</feature>
<feature type="splice variant" id="VSP_040933" description="In isoform 2." evidence="3">
    <original>N</original>
    <variation>NVCKAVSDFCKWVTTF</variation>
    <location>
        <position position="223"/>
    </location>
</feature>
<feature type="splice variant" id="VSP_040934" description="In isoform 3." evidence="4">
    <original>EELLADLHGTVAFKDFILSRGYRTPRFLENMYIGKECKRACNKTPIKRTQA</original>
    <variation>SIFKKAMDI</variation>
    <location>
        <begin position="343"/>
        <end position="393"/>
    </location>
</feature>
<feature type="sequence conflict" description="In Ref. 1; BAC85998." evidence="5" ref="1">
    <original>E</original>
    <variation>K</variation>
    <location>
        <position position="273"/>
    </location>
</feature>
<feature type="sequence conflict" description="In Ref. 1; BAC85998." evidence="5" ref="1">
    <original>T</original>
    <variation>M</variation>
    <location>
        <position position="366"/>
    </location>
</feature>
<keyword id="KW-0025">Alternative splicing</keyword>
<keyword id="KW-0156">Chromatin regulator</keyword>
<keyword id="KW-0158">Chromosome</keyword>
<keyword id="KW-0175">Coiled coil</keyword>
<keyword id="KW-0963">Cytoplasm</keyword>
<keyword id="KW-0539">Nucleus</keyword>
<keyword id="KW-1185">Reference proteome</keyword>
<proteinExistence type="evidence at protein level"/>
<protein>
    <recommendedName>
        <fullName>Protein FAM47E</fullName>
    </recommendedName>
</protein>
<gene>
    <name type="primary">FAM47E</name>
</gene>
<organism>
    <name type="scientific">Homo sapiens</name>
    <name type="common">Human</name>
    <dbReference type="NCBI Taxonomy" id="9606"/>
    <lineage>
        <taxon>Eukaryota</taxon>
        <taxon>Metazoa</taxon>
        <taxon>Chordata</taxon>
        <taxon>Craniata</taxon>
        <taxon>Vertebrata</taxon>
        <taxon>Euteleostomi</taxon>
        <taxon>Mammalia</taxon>
        <taxon>Eutheria</taxon>
        <taxon>Euarchontoglires</taxon>
        <taxon>Primates</taxon>
        <taxon>Haplorrhini</taxon>
        <taxon>Catarrhini</taxon>
        <taxon>Hominidae</taxon>
        <taxon>Homo</taxon>
    </lineage>
</organism>
<reference key="1">
    <citation type="journal article" date="2004" name="Nat. Genet.">
        <title>Complete sequencing and characterization of 21,243 full-length human cDNAs.</title>
        <authorList>
            <person name="Ota T."/>
            <person name="Suzuki Y."/>
            <person name="Nishikawa T."/>
            <person name="Otsuki T."/>
            <person name="Sugiyama T."/>
            <person name="Irie R."/>
            <person name="Wakamatsu A."/>
            <person name="Hayashi K."/>
            <person name="Sato H."/>
            <person name="Nagai K."/>
            <person name="Kimura K."/>
            <person name="Makita H."/>
            <person name="Sekine M."/>
            <person name="Obayashi M."/>
            <person name="Nishi T."/>
            <person name="Shibahara T."/>
            <person name="Tanaka T."/>
            <person name="Ishii S."/>
            <person name="Yamamoto J."/>
            <person name="Saito K."/>
            <person name="Kawai Y."/>
            <person name="Isono Y."/>
            <person name="Nakamura Y."/>
            <person name="Nagahari K."/>
            <person name="Murakami K."/>
            <person name="Yasuda T."/>
            <person name="Iwayanagi T."/>
            <person name="Wagatsuma M."/>
            <person name="Shiratori A."/>
            <person name="Sudo H."/>
            <person name="Hosoiri T."/>
            <person name="Kaku Y."/>
            <person name="Kodaira H."/>
            <person name="Kondo H."/>
            <person name="Sugawara M."/>
            <person name="Takahashi M."/>
            <person name="Kanda K."/>
            <person name="Yokoi T."/>
            <person name="Furuya T."/>
            <person name="Kikkawa E."/>
            <person name="Omura Y."/>
            <person name="Abe K."/>
            <person name="Kamihara K."/>
            <person name="Katsuta N."/>
            <person name="Sato K."/>
            <person name="Tanikawa M."/>
            <person name="Yamazaki M."/>
            <person name="Ninomiya K."/>
            <person name="Ishibashi T."/>
            <person name="Yamashita H."/>
            <person name="Murakawa K."/>
            <person name="Fujimori K."/>
            <person name="Tanai H."/>
            <person name="Kimata M."/>
            <person name="Watanabe M."/>
            <person name="Hiraoka S."/>
            <person name="Chiba Y."/>
            <person name="Ishida S."/>
            <person name="Ono Y."/>
            <person name="Takiguchi S."/>
            <person name="Watanabe S."/>
            <person name="Yosida M."/>
            <person name="Hotuta T."/>
            <person name="Kusano J."/>
            <person name="Kanehori K."/>
            <person name="Takahashi-Fujii A."/>
            <person name="Hara H."/>
            <person name="Tanase T.-O."/>
            <person name="Nomura Y."/>
            <person name="Togiya S."/>
            <person name="Komai F."/>
            <person name="Hara R."/>
            <person name="Takeuchi K."/>
            <person name="Arita M."/>
            <person name="Imose N."/>
            <person name="Musashino K."/>
            <person name="Yuuki H."/>
            <person name="Oshima A."/>
            <person name="Sasaki N."/>
            <person name="Aotsuka S."/>
            <person name="Yoshikawa Y."/>
            <person name="Matsunawa H."/>
            <person name="Ichihara T."/>
            <person name="Shiohata N."/>
            <person name="Sano S."/>
            <person name="Moriya S."/>
            <person name="Momiyama H."/>
            <person name="Satoh N."/>
            <person name="Takami S."/>
            <person name="Terashima Y."/>
            <person name="Suzuki O."/>
            <person name="Nakagawa S."/>
            <person name="Senoh A."/>
            <person name="Mizoguchi H."/>
            <person name="Goto Y."/>
            <person name="Shimizu F."/>
            <person name="Wakebe H."/>
            <person name="Hishigaki H."/>
            <person name="Watanabe T."/>
            <person name="Sugiyama A."/>
            <person name="Takemoto M."/>
            <person name="Kawakami B."/>
            <person name="Yamazaki M."/>
            <person name="Watanabe K."/>
            <person name="Kumagai A."/>
            <person name="Itakura S."/>
            <person name="Fukuzumi Y."/>
            <person name="Fujimori Y."/>
            <person name="Komiyama M."/>
            <person name="Tashiro H."/>
            <person name="Tanigami A."/>
            <person name="Fujiwara T."/>
            <person name="Ono T."/>
            <person name="Yamada K."/>
            <person name="Fujii Y."/>
            <person name="Ozaki K."/>
            <person name="Hirao M."/>
            <person name="Ohmori Y."/>
            <person name="Kawabata A."/>
            <person name="Hikiji T."/>
            <person name="Kobatake N."/>
            <person name="Inagaki H."/>
            <person name="Ikema Y."/>
            <person name="Okamoto S."/>
            <person name="Okitani R."/>
            <person name="Kawakami T."/>
            <person name="Noguchi S."/>
            <person name="Itoh T."/>
            <person name="Shigeta K."/>
            <person name="Senba T."/>
            <person name="Matsumura K."/>
            <person name="Nakajima Y."/>
            <person name="Mizuno T."/>
            <person name="Morinaga M."/>
            <person name="Sasaki M."/>
            <person name="Togashi T."/>
            <person name="Oyama M."/>
            <person name="Hata H."/>
            <person name="Watanabe M."/>
            <person name="Komatsu T."/>
            <person name="Mizushima-Sugano J."/>
            <person name="Satoh T."/>
            <person name="Shirai Y."/>
            <person name="Takahashi Y."/>
            <person name="Nakagawa K."/>
            <person name="Okumura K."/>
            <person name="Nagase T."/>
            <person name="Nomura N."/>
            <person name="Kikuchi H."/>
            <person name="Masuho Y."/>
            <person name="Yamashita R."/>
            <person name="Nakai K."/>
            <person name="Yada T."/>
            <person name="Nakamura Y."/>
            <person name="Ohara O."/>
            <person name="Isogai T."/>
            <person name="Sugano S."/>
        </authorList>
    </citation>
    <scope>NUCLEOTIDE SEQUENCE [LARGE SCALE MRNA] (ISOFORMS 1 AND 2)</scope>
    <source>
        <tissue>Subthalamic nucleus</tissue>
        <tissue>Tongue</tissue>
    </source>
</reference>
<reference key="2">
    <citation type="submission" date="2004-07" db="EMBL/GenBank/DDBJ databases">
        <title>Full-length cDNA libraries and normalization.</title>
        <authorList>
            <person name="Li W.B."/>
            <person name="Gruber C."/>
            <person name="Jessee J."/>
            <person name="Polayes D."/>
        </authorList>
    </citation>
    <scope>NUCLEOTIDE SEQUENCE [LARGE SCALE MRNA] (ISOFORM 3)</scope>
    <source>
        <tissue>Placenta</tissue>
    </source>
</reference>
<reference key="3">
    <citation type="journal article" date="2005" name="Nature">
        <title>Generation and annotation of the DNA sequences of human chromosomes 2 and 4.</title>
        <authorList>
            <person name="Hillier L.W."/>
            <person name="Graves T.A."/>
            <person name="Fulton R.S."/>
            <person name="Fulton L.A."/>
            <person name="Pepin K.H."/>
            <person name="Minx P."/>
            <person name="Wagner-McPherson C."/>
            <person name="Layman D."/>
            <person name="Wylie K."/>
            <person name="Sekhon M."/>
            <person name="Becker M.C."/>
            <person name="Fewell G.A."/>
            <person name="Delehaunty K.D."/>
            <person name="Miner T.L."/>
            <person name="Nash W.E."/>
            <person name="Kremitzki C."/>
            <person name="Oddy L."/>
            <person name="Du H."/>
            <person name="Sun H."/>
            <person name="Bradshaw-Cordum H."/>
            <person name="Ali J."/>
            <person name="Carter J."/>
            <person name="Cordes M."/>
            <person name="Harris A."/>
            <person name="Isak A."/>
            <person name="van Brunt A."/>
            <person name="Nguyen C."/>
            <person name="Du F."/>
            <person name="Courtney L."/>
            <person name="Kalicki J."/>
            <person name="Ozersky P."/>
            <person name="Abbott S."/>
            <person name="Armstrong J."/>
            <person name="Belter E.A."/>
            <person name="Caruso L."/>
            <person name="Cedroni M."/>
            <person name="Cotton M."/>
            <person name="Davidson T."/>
            <person name="Desai A."/>
            <person name="Elliott G."/>
            <person name="Erb T."/>
            <person name="Fronick C."/>
            <person name="Gaige T."/>
            <person name="Haakenson W."/>
            <person name="Haglund K."/>
            <person name="Holmes A."/>
            <person name="Harkins R."/>
            <person name="Kim K."/>
            <person name="Kruchowski S.S."/>
            <person name="Strong C.M."/>
            <person name="Grewal N."/>
            <person name="Goyea E."/>
            <person name="Hou S."/>
            <person name="Levy A."/>
            <person name="Martinka S."/>
            <person name="Mead K."/>
            <person name="McLellan M.D."/>
            <person name="Meyer R."/>
            <person name="Randall-Maher J."/>
            <person name="Tomlinson C."/>
            <person name="Dauphin-Kohlberg S."/>
            <person name="Kozlowicz-Reilly A."/>
            <person name="Shah N."/>
            <person name="Swearengen-Shahid S."/>
            <person name="Snider J."/>
            <person name="Strong J.T."/>
            <person name="Thompson J."/>
            <person name="Yoakum M."/>
            <person name="Leonard S."/>
            <person name="Pearman C."/>
            <person name="Trani L."/>
            <person name="Radionenko M."/>
            <person name="Waligorski J.E."/>
            <person name="Wang C."/>
            <person name="Rock S.M."/>
            <person name="Tin-Wollam A.-M."/>
            <person name="Maupin R."/>
            <person name="Latreille P."/>
            <person name="Wendl M.C."/>
            <person name="Yang S.-P."/>
            <person name="Pohl C."/>
            <person name="Wallis J.W."/>
            <person name="Spieth J."/>
            <person name="Bieri T.A."/>
            <person name="Berkowicz N."/>
            <person name="Nelson J.O."/>
            <person name="Osborne J."/>
            <person name="Ding L."/>
            <person name="Meyer R."/>
            <person name="Sabo A."/>
            <person name="Shotland Y."/>
            <person name="Sinha P."/>
            <person name="Wohldmann P.E."/>
            <person name="Cook L.L."/>
            <person name="Hickenbotham M.T."/>
            <person name="Eldred J."/>
            <person name="Williams D."/>
            <person name="Jones T.A."/>
            <person name="She X."/>
            <person name="Ciccarelli F.D."/>
            <person name="Izaurralde E."/>
            <person name="Taylor J."/>
            <person name="Schmutz J."/>
            <person name="Myers R.M."/>
            <person name="Cox D.R."/>
            <person name="Huang X."/>
            <person name="McPherson J.D."/>
            <person name="Mardis E.R."/>
            <person name="Clifton S.W."/>
            <person name="Warren W.C."/>
            <person name="Chinwalla A.T."/>
            <person name="Eddy S.R."/>
            <person name="Marra M.A."/>
            <person name="Ovcharenko I."/>
            <person name="Furey T.S."/>
            <person name="Miller W."/>
            <person name="Eichler E.E."/>
            <person name="Bork P."/>
            <person name="Suyama M."/>
            <person name="Torrents D."/>
            <person name="Waterston R.H."/>
            <person name="Wilson R.K."/>
        </authorList>
    </citation>
    <scope>NUCLEOTIDE SEQUENCE [LARGE SCALE GENOMIC DNA]</scope>
</reference>
<reference key="4">
    <citation type="journal article" date="2021" name="Life. Sci Alliance">
        <title>The uncharacterized protein FAM47E interacts with PRMT5 and regulates its functions.</title>
        <authorList>
            <person name="Chakrapani B."/>
            <person name="Khan M.I.K."/>
            <person name="Kadumuri R.V."/>
            <person name="Gupta S."/>
            <person name="Verma M."/>
            <person name="Awasthi S."/>
            <person name="Govindaraju G."/>
            <person name="Mahesh A."/>
            <person name="Rajavelu A."/>
            <person name="Chavali S."/>
            <person name="Dhayalan A."/>
        </authorList>
    </citation>
    <scope>FUNCTION</scope>
    <scope>INTERACTION WITH PRMT5</scope>
    <scope>SUBCELLULAR LOCATION</scope>
</reference>
<name>FA47E_HUMAN</name>
<accession>Q6ZV65</accession>
<accession>D6R8Y4</accession>
<comment type="function">
    <text evidence="2">Promotes histone methylation by localizing the arginine methyltransferase PRMT5 to chromatin.</text>
</comment>
<comment type="subunit">
    <text evidence="2">Interacts with PRMT5; the interaction is direct (PubMed:33376131). Interacts with WDR77 (PubMed:33376131).</text>
</comment>
<comment type="interaction">
    <interactant intactId="EBI-26583822">
        <id>Q6ZV65</id>
    </interactant>
    <interactant intactId="EBI-351098">
        <id>O14744</id>
        <label>PRMT5</label>
    </interactant>
    <organismsDiffer>false</organismsDiffer>
    <experiments>2</experiments>
</comment>
<comment type="interaction">
    <interactant intactId="EBI-26583549">
        <id>Q6ZV65-2</id>
    </interactant>
    <interactant intactId="EBI-26583938">
        <id>O14744-1</id>
        <label>PRMT5</label>
    </interactant>
    <organismsDiffer>false</organismsDiffer>
    <experiments>5</experiments>
</comment>
<comment type="subcellular location">
    <subcellularLocation>
        <location evidence="2">Nucleus</location>
    </subcellularLocation>
    <subcellularLocation>
        <location evidence="2">Chromosome</location>
    </subcellularLocation>
    <subcellularLocation>
        <location evidence="2">Cytoplasm</location>
    </subcellularLocation>
    <text evidence="2">Localizes to promoter regions of PRMT5 target genes.</text>
</comment>
<comment type="alternative products">
    <event type="alternative splicing"/>
    <isoform>
        <id>Q6ZV65-3</id>
        <name>1</name>
        <sequence type="displayed"/>
    </isoform>
    <isoform>
        <id>Q6ZV65-2</id>
        <name>2</name>
        <sequence type="described" ref="VSP_040931 VSP_040932 VSP_040933"/>
    </isoform>
    <isoform>
        <id>Q6ZV65-1</id>
        <name>3</name>
        <sequence type="described" ref="VSP_040934"/>
    </isoform>
</comment>
<comment type="similarity">
    <text evidence="5">Belongs to the FAM47 family.</text>
</comment>
<sequence length="393" mass="45662">MADRRRRLRPGTLAPVREGVNCRSRCFTKHKNGLKFPTSLHSRQLVFPRKGLDDFRKGCPPCTGLVTQVPVEGFLPQIYHRAPQLAPKKRQIKLLKEADVLSKLSPAQQARKAFLEDVEAHLTPHPLALYLNLEEAMPIELLSKVLEVLDPDRKLEDTWAYCQDTRKGMKEPTKLLKKHSTQVYLGPSKKTSVSNAGQWLYEEKPHKMDLLHENGPRPGLHENGISDIDEEFILKQFDIDYETKPSHDALHTMKLNQVPLELKRSVGLSKLQETEFFQKLGYERKLQKPQNPYKPKWVKMRYGAWYLNPKLWKKQRVDEPLVDPEVSHKAQEENFKKELQEQEELLADLHGTVAFKDFILSRGYRTPRFLENMYIGKECKRACNKTPIKRTQA</sequence>
<dbReference type="EMBL" id="AK092277">
    <property type="status" value="NOT_ANNOTATED_CDS"/>
    <property type="molecule type" value="mRNA"/>
</dbReference>
<dbReference type="EMBL" id="AK124936">
    <property type="protein sequence ID" value="BAC85998.1"/>
    <property type="molecule type" value="mRNA"/>
</dbReference>
<dbReference type="EMBL" id="CR591456">
    <property type="status" value="NOT_ANNOTATED_CDS"/>
    <property type="molecule type" value="mRNA"/>
</dbReference>
<dbReference type="EMBL" id="AC034139">
    <property type="status" value="NOT_ANNOTATED_CDS"/>
    <property type="molecule type" value="Genomic_DNA"/>
</dbReference>
<dbReference type="CCDS" id="CCDS47081.1">
    <molecule id="Q6ZV65-3"/>
</dbReference>
<dbReference type="CCDS" id="CCDS58907.1">
    <molecule id="Q6ZV65-2"/>
</dbReference>
<dbReference type="RefSeq" id="NP_001130042.1">
    <molecule id="Q6ZV65-3"/>
    <property type="nucleotide sequence ID" value="NM_001136570.3"/>
</dbReference>
<dbReference type="RefSeq" id="NP_001229865.1">
    <molecule id="Q6ZV65-2"/>
    <property type="nucleotide sequence ID" value="NM_001242936.1"/>
</dbReference>
<dbReference type="RefSeq" id="NP_001229868.1">
    <molecule id="Q6ZV65-1"/>
    <property type="nucleotide sequence ID" value="NM_001242939.1"/>
</dbReference>
<dbReference type="BioGRID" id="1530105">
    <property type="interactions" value="5"/>
</dbReference>
<dbReference type="BioGRID" id="934170">
    <property type="interactions" value="3"/>
</dbReference>
<dbReference type="FunCoup" id="Q6ZV65">
    <property type="interactions" value="1008"/>
</dbReference>
<dbReference type="IntAct" id="Q6ZV65">
    <property type="interactions" value="2"/>
</dbReference>
<dbReference type="STRING" id="9606.ENSP00000409423"/>
<dbReference type="BioMuta" id="FAM47E"/>
<dbReference type="DMDM" id="327478584"/>
<dbReference type="MassIVE" id="Q6ZV65"/>
<dbReference type="PaxDb" id="9606-ENSP00000409423"/>
<dbReference type="PeptideAtlas" id="Q6ZV65"/>
<dbReference type="ProteomicsDB" id="68392">
    <molecule id="Q6ZV65-3"/>
</dbReference>
<dbReference type="ProteomicsDB" id="68393">
    <molecule id="Q6ZV65-1"/>
</dbReference>
<dbReference type="ProteomicsDB" id="68394">
    <molecule id="Q6ZV65-2"/>
</dbReference>
<dbReference type="Antibodypedia" id="64546">
    <property type="antibodies" value="29 antibodies from 10 providers"/>
</dbReference>
<dbReference type="DNASU" id="100129583"/>
<dbReference type="Ensembl" id="ENST00000424749.7">
    <molecule id="Q6ZV65-3"/>
    <property type="protein sequence ID" value="ENSP00000409423.2"/>
    <property type="gene ID" value="ENSG00000189157.14"/>
</dbReference>
<dbReference type="Ensembl" id="ENST00000510197.5">
    <molecule id="Q6ZV65-2"/>
    <property type="protein sequence ID" value="ENSP00000422262.1"/>
    <property type="gene ID" value="ENSG00000189157.14"/>
</dbReference>
<dbReference type="GeneID" id="100129583"/>
<dbReference type="GeneID" id="100631383"/>
<dbReference type="KEGG" id="hsa:100129583"/>
<dbReference type="KEGG" id="hsa:100631383"/>
<dbReference type="MANE-Select" id="ENST00000424749.7">
    <property type="protein sequence ID" value="ENSP00000409423.2"/>
    <property type="RefSeq nucleotide sequence ID" value="NM_001136570.3"/>
    <property type="RefSeq protein sequence ID" value="NP_001130042.1"/>
</dbReference>
<dbReference type="UCSC" id="uc003hjv.4">
    <molecule id="Q6ZV65-3"/>
    <property type="organism name" value="human"/>
</dbReference>
<dbReference type="AGR" id="HGNC:34343"/>
<dbReference type="AGR" id="HGNC:44667"/>
<dbReference type="CTD" id="100129583"/>
<dbReference type="CTD" id="100631383"/>
<dbReference type="DisGeNET" id="100129583"/>
<dbReference type="GeneCards" id="FAM47E"/>
<dbReference type="HGNC" id="HGNC:34343">
    <property type="gene designation" value="FAM47E"/>
</dbReference>
<dbReference type="HPA" id="ENSG00000189157">
    <property type="expression patterns" value="Low tissue specificity"/>
</dbReference>
<dbReference type="neXtProt" id="NX_Q6ZV65"/>
<dbReference type="OpenTargets" id="ENSG00000189157"/>
<dbReference type="OpenTargets" id="ENSG00000272414"/>
<dbReference type="VEuPathDB" id="HostDB:ENSG00000189157"/>
<dbReference type="eggNOG" id="ENOG502QRUF">
    <property type="taxonomic scope" value="Eukaryota"/>
</dbReference>
<dbReference type="GeneTree" id="ENSGT00940000162425"/>
<dbReference type="HOGENOM" id="CLU_092258_0_0_1"/>
<dbReference type="InParanoid" id="Q6ZV65"/>
<dbReference type="OMA" id="RSGCFTK"/>
<dbReference type="OrthoDB" id="6755972at2759"/>
<dbReference type="PAN-GO" id="Q6ZV65">
    <property type="GO annotations" value="4 GO annotations based on evolutionary models"/>
</dbReference>
<dbReference type="PhylomeDB" id="Q6ZV65"/>
<dbReference type="TreeFam" id="TF340932"/>
<dbReference type="PathwayCommons" id="Q6ZV65"/>
<dbReference type="SignaLink" id="Q6ZV65"/>
<dbReference type="BioGRID-ORCS" id="100129583">
    <property type="hits" value="7 hits in 1134 CRISPR screens"/>
</dbReference>
<dbReference type="BioGRID-ORCS" id="100631383">
    <property type="hits" value="13 hits in 1041 CRISPR screens"/>
</dbReference>
<dbReference type="ChiTaRS" id="FAM47E">
    <property type="organism name" value="human"/>
</dbReference>
<dbReference type="Pharos" id="Q6ZV65">
    <property type="development level" value="Tdark"/>
</dbReference>
<dbReference type="PRO" id="PR:Q6ZV65"/>
<dbReference type="Proteomes" id="UP000005640">
    <property type="component" value="Chromosome 4"/>
</dbReference>
<dbReference type="RNAct" id="Q6ZV65">
    <property type="molecule type" value="protein"/>
</dbReference>
<dbReference type="Bgee" id="ENSG00000189157">
    <property type="expression patterns" value="Expressed in right uterine tube and 92 other cell types or tissues"/>
</dbReference>
<dbReference type="ExpressionAtlas" id="Q6ZV65">
    <property type="expression patterns" value="baseline and differential"/>
</dbReference>
<dbReference type="GO" id="GO:0000785">
    <property type="term" value="C:chromatin"/>
    <property type="evidence" value="ECO:0000314"/>
    <property type="project" value="UniProtKB"/>
</dbReference>
<dbReference type="GO" id="GO:0005737">
    <property type="term" value="C:cytoplasm"/>
    <property type="evidence" value="ECO:0000314"/>
    <property type="project" value="UniProtKB"/>
</dbReference>
<dbReference type="GO" id="GO:0005634">
    <property type="term" value="C:nucleus"/>
    <property type="evidence" value="ECO:0000314"/>
    <property type="project" value="UniProtKB"/>
</dbReference>
<dbReference type="GO" id="GO:0008047">
    <property type="term" value="F:enzyme activator activity"/>
    <property type="evidence" value="ECO:0000315"/>
    <property type="project" value="UniProtKB"/>
</dbReference>
<dbReference type="GO" id="GO:0071168">
    <property type="term" value="P:protein localization to chromatin"/>
    <property type="evidence" value="ECO:0000315"/>
    <property type="project" value="UniProtKB"/>
</dbReference>
<dbReference type="GO" id="GO:0045815">
    <property type="term" value="P:transcription initiation-coupled chromatin remodeling"/>
    <property type="evidence" value="ECO:0000315"/>
    <property type="project" value="ARUK-UCL"/>
</dbReference>
<dbReference type="InterPro" id="IPR032743">
    <property type="entry name" value="FAM47"/>
</dbReference>
<dbReference type="PANTHER" id="PTHR46449:SF3">
    <property type="entry name" value="PROTEIN FAM47E"/>
    <property type="match status" value="1"/>
</dbReference>
<dbReference type="PANTHER" id="PTHR46449">
    <property type="entry name" value="ZGC:158260"/>
    <property type="match status" value="1"/>
</dbReference>
<dbReference type="Pfam" id="PF14642">
    <property type="entry name" value="FAM47"/>
    <property type="match status" value="1"/>
</dbReference>